<gene>
    <name evidence="1" type="primary">upp</name>
    <name type="ordered locus">Sez_1615</name>
</gene>
<dbReference type="EC" id="2.4.2.9" evidence="1"/>
<dbReference type="EMBL" id="CP001129">
    <property type="protein sequence ID" value="ACG62946.1"/>
    <property type="molecule type" value="Genomic_DNA"/>
</dbReference>
<dbReference type="RefSeq" id="WP_012516202.1">
    <property type="nucleotide sequence ID" value="NC_011134.1"/>
</dbReference>
<dbReference type="SMR" id="B4U4M9"/>
<dbReference type="KEGG" id="sez:Sez_1615"/>
<dbReference type="HOGENOM" id="CLU_067096_2_2_9"/>
<dbReference type="UniPathway" id="UPA00574">
    <property type="reaction ID" value="UER00636"/>
</dbReference>
<dbReference type="Proteomes" id="UP000001873">
    <property type="component" value="Chromosome"/>
</dbReference>
<dbReference type="GO" id="GO:0005525">
    <property type="term" value="F:GTP binding"/>
    <property type="evidence" value="ECO:0007669"/>
    <property type="project" value="UniProtKB-KW"/>
</dbReference>
<dbReference type="GO" id="GO:0000287">
    <property type="term" value="F:magnesium ion binding"/>
    <property type="evidence" value="ECO:0007669"/>
    <property type="project" value="UniProtKB-UniRule"/>
</dbReference>
<dbReference type="GO" id="GO:0004845">
    <property type="term" value="F:uracil phosphoribosyltransferase activity"/>
    <property type="evidence" value="ECO:0007669"/>
    <property type="project" value="UniProtKB-UniRule"/>
</dbReference>
<dbReference type="GO" id="GO:0044206">
    <property type="term" value="P:UMP salvage"/>
    <property type="evidence" value="ECO:0007669"/>
    <property type="project" value="UniProtKB-UniRule"/>
</dbReference>
<dbReference type="GO" id="GO:0006223">
    <property type="term" value="P:uracil salvage"/>
    <property type="evidence" value="ECO:0007669"/>
    <property type="project" value="InterPro"/>
</dbReference>
<dbReference type="CDD" id="cd06223">
    <property type="entry name" value="PRTases_typeI"/>
    <property type="match status" value="1"/>
</dbReference>
<dbReference type="FunFam" id="3.40.50.2020:FF:000003">
    <property type="entry name" value="Uracil phosphoribosyltransferase"/>
    <property type="match status" value="1"/>
</dbReference>
<dbReference type="Gene3D" id="3.40.50.2020">
    <property type="match status" value="1"/>
</dbReference>
<dbReference type="HAMAP" id="MF_01218_B">
    <property type="entry name" value="Upp_B"/>
    <property type="match status" value="1"/>
</dbReference>
<dbReference type="InterPro" id="IPR000836">
    <property type="entry name" value="PRibTrfase_dom"/>
</dbReference>
<dbReference type="InterPro" id="IPR029057">
    <property type="entry name" value="PRTase-like"/>
</dbReference>
<dbReference type="InterPro" id="IPR034332">
    <property type="entry name" value="Upp_B"/>
</dbReference>
<dbReference type="InterPro" id="IPR050054">
    <property type="entry name" value="UPRTase/APRTase"/>
</dbReference>
<dbReference type="InterPro" id="IPR005765">
    <property type="entry name" value="Ura_phspho_trans"/>
</dbReference>
<dbReference type="NCBIfam" id="NF001097">
    <property type="entry name" value="PRK00129.1"/>
    <property type="match status" value="1"/>
</dbReference>
<dbReference type="NCBIfam" id="TIGR01091">
    <property type="entry name" value="upp"/>
    <property type="match status" value="1"/>
</dbReference>
<dbReference type="PANTHER" id="PTHR32315">
    <property type="entry name" value="ADENINE PHOSPHORIBOSYLTRANSFERASE"/>
    <property type="match status" value="1"/>
</dbReference>
<dbReference type="PANTHER" id="PTHR32315:SF4">
    <property type="entry name" value="URACIL PHOSPHORIBOSYLTRANSFERASE, CHLOROPLASTIC"/>
    <property type="match status" value="1"/>
</dbReference>
<dbReference type="Pfam" id="PF14681">
    <property type="entry name" value="UPRTase"/>
    <property type="match status" value="1"/>
</dbReference>
<dbReference type="SUPFAM" id="SSF53271">
    <property type="entry name" value="PRTase-like"/>
    <property type="match status" value="1"/>
</dbReference>
<name>UPP_STREM</name>
<protein>
    <recommendedName>
        <fullName evidence="1">Uracil phosphoribosyltransferase</fullName>
        <ecNumber evidence="1">2.4.2.9</ecNumber>
    </recommendedName>
    <alternativeName>
        <fullName evidence="1">UMP pyrophosphorylase</fullName>
    </alternativeName>
    <alternativeName>
        <fullName evidence="1">UPRTase</fullName>
    </alternativeName>
</protein>
<keyword id="KW-0021">Allosteric enzyme</keyword>
<keyword id="KW-0328">Glycosyltransferase</keyword>
<keyword id="KW-0342">GTP-binding</keyword>
<keyword id="KW-0460">Magnesium</keyword>
<keyword id="KW-0547">Nucleotide-binding</keyword>
<keyword id="KW-0808">Transferase</keyword>
<accession>B4U4M9</accession>
<feature type="chain" id="PRO_1000139165" description="Uracil phosphoribosyltransferase">
    <location>
        <begin position="1"/>
        <end position="209"/>
    </location>
</feature>
<feature type="binding site" evidence="1">
    <location>
        <position position="79"/>
    </location>
    <ligand>
        <name>5-phospho-alpha-D-ribose 1-diphosphate</name>
        <dbReference type="ChEBI" id="CHEBI:58017"/>
    </ligand>
</feature>
<feature type="binding site" evidence="1">
    <location>
        <position position="104"/>
    </location>
    <ligand>
        <name>5-phospho-alpha-D-ribose 1-diphosphate</name>
        <dbReference type="ChEBI" id="CHEBI:58017"/>
    </ligand>
</feature>
<feature type="binding site" evidence="1">
    <location>
        <begin position="131"/>
        <end position="139"/>
    </location>
    <ligand>
        <name>5-phospho-alpha-D-ribose 1-diphosphate</name>
        <dbReference type="ChEBI" id="CHEBI:58017"/>
    </ligand>
</feature>
<feature type="binding site" evidence="1">
    <location>
        <position position="194"/>
    </location>
    <ligand>
        <name>uracil</name>
        <dbReference type="ChEBI" id="CHEBI:17568"/>
    </ligand>
</feature>
<feature type="binding site" evidence="1">
    <location>
        <begin position="199"/>
        <end position="201"/>
    </location>
    <ligand>
        <name>uracil</name>
        <dbReference type="ChEBI" id="CHEBI:17568"/>
    </ligand>
</feature>
<feature type="binding site" evidence="1">
    <location>
        <position position="200"/>
    </location>
    <ligand>
        <name>5-phospho-alpha-D-ribose 1-diphosphate</name>
        <dbReference type="ChEBI" id="CHEBI:58017"/>
    </ligand>
</feature>
<sequence>MGKCQVISHPLIQHKLSILRRQDTSTKDFRELVNEIAMLMGYEVSRDLPLEDVEIQTPVAKTVQKQLAGKKLAIVPILRAGIGMVDGFLSLVPAAKVGHIGMYRNEETLEPVEYLVKLPEDIDQRQIFIVDPMLATGGSAILAVDSLKKRGAANIKFVCLVAAPEGVKKLQEAHPDVDIYTAALDERLNDHGYIVPGLGDAGDRLFGTK</sequence>
<evidence type="ECO:0000255" key="1">
    <source>
        <dbReference type="HAMAP-Rule" id="MF_01218"/>
    </source>
</evidence>
<reference key="1">
    <citation type="journal article" date="2008" name="PLoS ONE">
        <title>Genome sequence of a lancefield group C Streptococcus zooepidemicus strain causing epidemic nephritis: new information about an old disease.</title>
        <authorList>
            <person name="Beres S.B."/>
            <person name="Sesso R."/>
            <person name="Pinto S.W.L."/>
            <person name="Hoe N.P."/>
            <person name="Porcella S.F."/>
            <person name="Deleo F.R."/>
            <person name="Musser J.M."/>
        </authorList>
    </citation>
    <scope>NUCLEOTIDE SEQUENCE [LARGE SCALE GENOMIC DNA]</scope>
    <source>
        <strain>MGCS10565</strain>
    </source>
</reference>
<organism>
    <name type="scientific">Streptococcus equi subsp. zooepidemicus (strain MGCS10565)</name>
    <dbReference type="NCBI Taxonomy" id="552526"/>
    <lineage>
        <taxon>Bacteria</taxon>
        <taxon>Bacillati</taxon>
        <taxon>Bacillota</taxon>
        <taxon>Bacilli</taxon>
        <taxon>Lactobacillales</taxon>
        <taxon>Streptococcaceae</taxon>
        <taxon>Streptococcus</taxon>
    </lineage>
</organism>
<proteinExistence type="inferred from homology"/>
<comment type="function">
    <text evidence="1">Catalyzes the conversion of uracil and 5-phospho-alpha-D-ribose 1-diphosphate (PRPP) to UMP and diphosphate.</text>
</comment>
<comment type="catalytic activity">
    <reaction evidence="1">
        <text>UMP + diphosphate = 5-phospho-alpha-D-ribose 1-diphosphate + uracil</text>
        <dbReference type="Rhea" id="RHEA:13017"/>
        <dbReference type="ChEBI" id="CHEBI:17568"/>
        <dbReference type="ChEBI" id="CHEBI:33019"/>
        <dbReference type="ChEBI" id="CHEBI:57865"/>
        <dbReference type="ChEBI" id="CHEBI:58017"/>
        <dbReference type="EC" id="2.4.2.9"/>
    </reaction>
</comment>
<comment type="cofactor">
    <cofactor evidence="1">
        <name>Mg(2+)</name>
        <dbReference type="ChEBI" id="CHEBI:18420"/>
    </cofactor>
    <text evidence="1">Binds 1 Mg(2+) ion per subunit. The magnesium is bound as Mg-PRPP.</text>
</comment>
<comment type="activity regulation">
    <text evidence="1">Allosterically activated by GTP.</text>
</comment>
<comment type="pathway">
    <text evidence="1">Pyrimidine metabolism; UMP biosynthesis via salvage pathway; UMP from uracil: step 1/1.</text>
</comment>
<comment type="similarity">
    <text evidence="1">Belongs to the UPRTase family.</text>
</comment>